<name>AHP2_ARATH</name>
<dbReference type="EMBL" id="AB012568">
    <property type="protein sequence ID" value="BAA37110.1"/>
    <property type="molecule type" value="mRNA"/>
</dbReference>
<dbReference type="EMBL" id="AB015142">
    <property type="protein sequence ID" value="BAA36336.1"/>
    <property type="molecule type" value="mRNA"/>
</dbReference>
<dbReference type="EMBL" id="AP001309">
    <property type="protein sequence ID" value="BAB02580.1"/>
    <property type="molecule type" value="Genomic_DNA"/>
</dbReference>
<dbReference type="EMBL" id="CP002686">
    <property type="protein sequence ID" value="AEE77571.1"/>
    <property type="molecule type" value="Genomic_DNA"/>
</dbReference>
<dbReference type="EMBL" id="CP002686">
    <property type="protein sequence ID" value="AEE77572.1"/>
    <property type="molecule type" value="Genomic_DNA"/>
</dbReference>
<dbReference type="EMBL" id="AY064148">
    <property type="protein sequence ID" value="AAL36054.1"/>
    <property type="molecule type" value="mRNA"/>
</dbReference>
<dbReference type="EMBL" id="AY097403">
    <property type="protein sequence ID" value="AAM19919.1"/>
    <property type="molecule type" value="mRNA"/>
</dbReference>
<dbReference type="RefSeq" id="NP_189581.1">
    <molecule id="Q9ZNV8-1"/>
    <property type="nucleotide sequence ID" value="NM_113860.4"/>
</dbReference>
<dbReference type="RefSeq" id="NP_850649.1">
    <molecule id="Q9ZNV8-2"/>
    <property type="nucleotide sequence ID" value="NM_180318.2"/>
</dbReference>
<dbReference type="PDB" id="4PAC">
    <property type="method" value="X-ray"/>
    <property type="resolution" value="2.53 A"/>
    <property type="chains" value="A=1-156"/>
</dbReference>
<dbReference type="PDBsum" id="4PAC"/>
<dbReference type="SMR" id="Q9ZNV8"/>
<dbReference type="BioGRID" id="7922">
    <property type="interactions" value="43"/>
</dbReference>
<dbReference type="FunCoup" id="Q9ZNV8">
    <property type="interactions" value="476"/>
</dbReference>
<dbReference type="IntAct" id="Q9ZNV8">
    <property type="interactions" value="46"/>
</dbReference>
<dbReference type="STRING" id="3702.Q9ZNV8"/>
<dbReference type="iPTMnet" id="Q9ZNV8"/>
<dbReference type="PaxDb" id="3702-AT3G29350.1"/>
<dbReference type="ProteomicsDB" id="245060">
    <molecule id="Q9ZNV8-1"/>
</dbReference>
<dbReference type="DNASU" id="822593"/>
<dbReference type="EnsemblPlants" id="AT3G29350.1">
    <molecule id="Q9ZNV8-1"/>
    <property type="protein sequence ID" value="AT3G29350.1"/>
    <property type="gene ID" value="AT3G29350"/>
</dbReference>
<dbReference type="EnsemblPlants" id="AT3G29350.2">
    <molecule id="Q9ZNV8-2"/>
    <property type="protein sequence ID" value="AT3G29350.2"/>
    <property type="gene ID" value="AT3G29350"/>
</dbReference>
<dbReference type="GeneID" id="822593"/>
<dbReference type="Gramene" id="AT3G29350.1">
    <molecule id="Q9ZNV8-1"/>
    <property type="protein sequence ID" value="AT3G29350.1"/>
    <property type="gene ID" value="AT3G29350"/>
</dbReference>
<dbReference type="Gramene" id="AT3G29350.2">
    <molecule id="Q9ZNV8-2"/>
    <property type="protein sequence ID" value="AT3G29350.2"/>
    <property type="gene ID" value="AT3G29350"/>
</dbReference>
<dbReference type="KEGG" id="ath:AT3G29350"/>
<dbReference type="Araport" id="AT3G29350"/>
<dbReference type="TAIR" id="AT3G29350">
    <property type="gene designation" value="AHP2"/>
</dbReference>
<dbReference type="eggNOG" id="KOG4747">
    <property type="taxonomic scope" value="Eukaryota"/>
</dbReference>
<dbReference type="HOGENOM" id="CLU_111777_1_0_1"/>
<dbReference type="InParanoid" id="Q9ZNV8"/>
<dbReference type="OMA" id="CTIRAGV"/>
<dbReference type="OrthoDB" id="1673781at2759"/>
<dbReference type="PhylomeDB" id="Q9ZNV8"/>
<dbReference type="EvolutionaryTrace" id="Q9ZNV8"/>
<dbReference type="PRO" id="PR:Q9ZNV8"/>
<dbReference type="Proteomes" id="UP000006548">
    <property type="component" value="Chromosome 3"/>
</dbReference>
<dbReference type="ExpressionAtlas" id="Q9ZNV8">
    <property type="expression patterns" value="baseline and differential"/>
</dbReference>
<dbReference type="GO" id="GO:0005737">
    <property type="term" value="C:cytoplasm"/>
    <property type="evidence" value="ECO:0000314"/>
    <property type="project" value="UniProtKB"/>
</dbReference>
<dbReference type="GO" id="GO:0005829">
    <property type="term" value="C:cytosol"/>
    <property type="evidence" value="ECO:0007005"/>
    <property type="project" value="TAIR"/>
</dbReference>
<dbReference type="GO" id="GO:0005634">
    <property type="term" value="C:nucleus"/>
    <property type="evidence" value="ECO:0000314"/>
    <property type="project" value="UniProtKB"/>
</dbReference>
<dbReference type="GO" id="GO:0009927">
    <property type="term" value="F:histidine phosphotransfer kinase activity"/>
    <property type="evidence" value="ECO:0000314"/>
    <property type="project" value="TAIR"/>
</dbReference>
<dbReference type="GO" id="GO:0043424">
    <property type="term" value="F:protein histidine kinase binding"/>
    <property type="evidence" value="ECO:0000353"/>
    <property type="project" value="UniProtKB"/>
</dbReference>
<dbReference type="GO" id="GO:0009557">
    <property type="term" value="P:antipodal cell differentiation"/>
    <property type="evidence" value="ECO:0000316"/>
    <property type="project" value="TAIR"/>
</dbReference>
<dbReference type="GO" id="GO:0009736">
    <property type="term" value="P:cytokinin-activated signaling pathway"/>
    <property type="evidence" value="ECO:0000315"/>
    <property type="project" value="TAIR"/>
</dbReference>
<dbReference type="GO" id="GO:0009560">
    <property type="term" value="P:embryo sac egg cell differentiation"/>
    <property type="evidence" value="ECO:0000316"/>
    <property type="project" value="TAIR"/>
</dbReference>
<dbReference type="GO" id="GO:0000160">
    <property type="term" value="P:phosphorelay signal transduction system"/>
    <property type="evidence" value="ECO:0000314"/>
    <property type="project" value="TAIR"/>
</dbReference>
<dbReference type="CDD" id="cd00088">
    <property type="entry name" value="HPT"/>
    <property type="match status" value="1"/>
</dbReference>
<dbReference type="FunFam" id="1.20.120.160:FF:000001">
    <property type="entry name" value="Histidine-containing phosphotransfer protein 1"/>
    <property type="match status" value="1"/>
</dbReference>
<dbReference type="Gene3D" id="1.20.120.160">
    <property type="entry name" value="HPT domain"/>
    <property type="match status" value="1"/>
</dbReference>
<dbReference type="InterPro" id="IPR045871">
    <property type="entry name" value="AHP1-5/YPD1"/>
</dbReference>
<dbReference type="InterPro" id="IPR036641">
    <property type="entry name" value="HPT_dom_sf"/>
</dbReference>
<dbReference type="InterPro" id="IPR008207">
    <property type="entry name" value="Sig_transdc_His_kin_Hpt_dom"/>
</dbReference>
<dbReference type="PANTHER" id="PTHR28242:SF26">
    <property type="entry name" value="HISTIDINE-CONTAINING PHOSPHOTRANSFER PROTEIN-RELATED"/>
    <property type="match status" value="1"/>
</dbReference>
<dbReference type="PANTHER" id="PTHR28242">
    <property type="entry name" value="PHOSPHORELAY INTERMEDIATE PROTEIN YPD1"/>
    <property type="match status" value="1"/>
</dbReference>
<dbReference type="Pfam" id="PF01627">
    <property type="entry name" value="Hpt"/>
    <property type="match status" value="1"/>
</dbReference>
<dbReference type="SUPFAM" id="SSF47226">
    <property type="entry name" value="Histidine-containing phosphotransfer domain, HPT domain"/>
    <property type="match status" value="1"/>
</dbReference>
<dbReference type="PROSITE" id="PS50894">
    <property type="entry name" value="HPT"/>
    <property type="match status" value="1"/>
</dbReference>
<organism>
    <name type="scientific">Arabidopsis thaliana</name>
    <name type="common">Mouse-ear cress</name>
    <dbReference type="NCBI Taxonomy" id="3702"/>
    <lineage>
        <taxon>Eukaryota</taxon>
        <taxon>Viridiplantae</taxon>
        <taxon>Streptophyta</taxon>
        <taxon>Embryophyta</taxon>
        <taxon>Tracheophyta</taxon>
        <taxon>Spermatophyta</taxon>
        <taxon>Magnoliopsida</taxon>
        <taxon>eudicotyledons</taxon>
        <taxon>Gunneridae</taxon>
        <taxon>Pentapetalae</taxon>
        <taxon>rosids</taxon>
        <taxon>malvids</taxon>
        <taxon>Brassicales</taxon>
        <taxon>Brassicaceae</taxon>
        <taxon>Camelineae</taxon>
        <taxon>Arabidopsis</taxon>
    </lineage>
</organism>
<keyword id="KW-0002">3D-structure</keyword>
<keyword id="KW-0007">Acetylation</keyword>
<keyword id="KW-0025">Alternative splicing</keyword>
<keyword id="KW-0932">Cytokinin signaling pathway</keyword>
<keyword id="KW-0963">Cytoplasm</keyword>
<keyword id="KW-0539">Nucleus</keyword>
<keyword id="KW-0597">Phosphoprotein</keyword>
<keyword id="KW-1185">Reference proteome</keyword>
<keyword id="KW-0346">Stress response</keyword>
<keyword id="KW-0902">Two-component regulatory system</keyword>
<sequence length="156" mass="17476">MDALIAQLQRQFRDYTISLYQQGFLDDQFTELKKLQDDGSPDFVSEVLSLFFEDCVKLISNMARALDTTGTVDFSQVGASVHQLKGSSSSVGAKRVKTLCVSFKECCEAKNYEGCVRCLQQVDIEYKALKTKLQDMFNLEKQIIQAGGIVPQVDIN</sequence>
<reference key="1">
    <citation type="journal article" date="1998" name="FEBS Lett.">
        <title>Characterization of genes for two-component phosphorelay mediators with a single HPt domain in Arabidopsis thaliana.</title>
        <authorList>
            <person name="Miyata S."/>
            <person name="Urao T."/>
            <person name="Yamaguchi-Shinozaki K."/>
            <person name="Shinozaki K."/>
        </authorList>
    </citation>
    <scope>NUCLEOTIDE SEQUENCE [MRNA]</scope>
    <scope>FUNCTION</scope>
    <scope>INDUCTION</scope>
    <scope>TISSUE SPECIFICITY</scope>
    <source>
        <strain>cv. Columbia</strain>
    </source>
</reference>
<reference key="2">
    <citation type="journal article" date="1998" name="Plant Cell Physiol.">
        <title>Histidine-containing phosphotransfer (HPt) signal transducers implicated in His-to-Asp phosphorelay in Arabidopsis.</title>
        <authorList>
            <person name="Suzuki T."/>
            <person name="Imamura A."/>
            <person name="Ueguchi C."/>
            <person name="Mizuno T."/>
        </authorList>
    </citation>
    <scope>NUCLEOTIDE SEQUENCE [MRNA]</scope>
    <scope>FUNCTION</scope>
    <source>
        <strain>cv. Columbia</strain>
    </source>
</reference>
<reference key="3">
    <citation type="journal article" date="2000" name="DNA Res.">
        <title>Structural analysis of Arabidopsis thaliana chromosome 3. II. Sequence features of the 4,251,695 bp regions covered by 90 P1, TAC and BAC clones.</title>
        <authorList>
            <person name="Kaneko T."/>
            <person name="Katoh T."/>
            <person name="Sato S."/>
            <person name="Nakamura Y."/>
            <person name="Asamizu E."/>
            <person name="Tabata S."/>
        </authorList>
    </citation>
    <scope>NUCLEOTIDE SEQUENCE [LARGE SCALE GENOMIC DNA]</scope>
    <source>
        <strain>cv. Columbia</strain>
    </source>
</reference>
<reference key="4">
    <citation type="journal article" date="2017" name="Plant J.">
        <title>Araport11: a complete reannotation of the Arabidopsis thaliana reference genome.</title>
        <authorList>
            <person name="Cheng C.Y."/>
            <person name="Krishnakumar V."/>
            <person name="Chan A.P."/>
            <person name="Thibaud-Nissen F."/>
            <person name="Schobel S."/>
            <person name="Town C.D."/>
        </authorList>
    </citation>
    <scope>GENOME REANNOTATION</scope>
    <source>
        <strain>cv. Columbia</strain>
    </source>
</reference>
<reference key="5">
    <citation type="journal article" date="2003" name="Science">
        <title>Empirical analysis of transcriptional activity in the Arabidopsis genome.</title>
        <authorList>
            <person name="Yamada K."/>
            <person name="Lim J."/>
            <person name="Dale J.M."/>
            <person name="Chen H."/>
            <person name="Shinn P."/>
            <person name="Palm C.J."/>
            <person name="Southwick A.M."/>
            <person name="Wu H.C."/>
            <person name="Kim C.J."/>
            <person name="Nguyen M."/>
            <person name="Pham P.K."/>
            <person name="Cheuk R.F."/>
            <person name="Karlin-Newmann G."/>
            <person name="Liu S.X."/>
            <person name="Lam B."/>
            <person name="Sakano H."/>
            <person name="Wu T."/>
            <person name="Yu G."/>
            <person name="Miranda M."/>
            <person name="Quach H.L."/>
            <person name="Tripp M."/>
            <person name="Chang C.H."/>
            <person name="Lee J.M."/>
            <person name="Toriumi M.J."/>
            <person name="Chan M.M."/>
            <person name="Tang C.C."/>
            <person name="Onodera C.S."/>
            <person name="Deng J.M."/>
            <person name="Akiyama K."/>
            <person name="Ansari Y."/>
            <person name="Arakawa T."/>
            <person name="Banh J."/>
            <person name="Banno F."/>
            <person name="Bowser L."/>
            <person name="Brooks S.Y."/>
            <person name="Carninci P."/>
            <person name="Chao Q."/>
            <person name="Choy N."/>
            <person name="Enju A."/>
            <person name="Goldsmith A.D."/>
            <person name="Gurjal M."/>
            <person name="Hansen N.F."/>
            <person name="Hayashizaki Y."/>
            <person name="Johnson-Hopson C."/>
            <person name="Hsuan V.W."/>
            <person name="Iida K."/>
            <person name="Karnes M."/>
            <person name="Khan S."/>
            <person name="Koesema E."/>
            <person name="Ishida J."/>
            <person name="Jiang P.X."/>
            <person name="Jones T."/>
            <person name="Kawai J."/>
            <person name="Kamiya A."/>
            <person name="Meyers C."/>
            <person name="Nakajima M."/>
            <person name="Narusaka M."/>
            <person name="Seki M."/>
            <person name="Sakurai T."/>
            <person name="Satou M."/>
            <person name="Tamse R."/>
            <person name="Vaysberg M."/>
            <person name="Wallender E.K."/>
            <person name="Wong C."/>
            <person name="Yamamura Y."/>
            <person name="Yuan S."/>
            <person name="Shinozaki K."/>
            <person name="Davis R.W."/>
            <person name="Theologis A."/>
            <person name="Ecker J.R."/>
        </authorList>
    </citation>
    <scope>NUCLEOTIDE SEQUENCE [LARGE SCALE MRNA]</scope>
    <source>
        <strain>cv. Columbia</strain>
    </source>
</reference>
<reference key="6">
    <citation type="journal article" date="2000" name="FEBS Lett.">
        <title>Possible His to Asp phosphorelay signaling in an Arabidopsis two-component system.</title>
        <authorList>
            <person name="Urao T."/>
            <person name="Miyata S."/>
            <person name="Yamaguchi-Shinozaki K."/>
            <person name="Shinozaki K."/>
        </authorList>
    </citation>
    <scope>INTERACTION WITH AHK1; ETR1 AND CKI1</scope>
</reference>
<reference key="7">
    <citation type="journal article" date="2001" name="Plant Cell Physiol.">
        <title>Two types of putative nuclear factors that physically interact with histidine-containing phosphotransfer (Hpt) domains, signaling mediators in His-to-Asp phosphorelay, in Arabidopsis thaliana.</title>
        <authorList>
            <person name="Suzuki T."/>
            <person name="Sakurai K."/>
            <person name="Ueguchi C."/>
            <person name="Mizuno T."/>
        </authorList>
    </citation>
    <scope>INTERACTION</scope>
</reference>
<reference key="8">
    <citation type="journal article" date="2001" name="Plant Cell Physiol.">
        <title>The Arabidopsis sensor His-kinase, AHk4, can respond to cytokinins.</title>
        <authorList>
            <person name="Suzuki T."/>
            <person name="Miwa K."/>
            <person name="Ishikawa K."/>
            <person name="Yamada H."/>
            <person name="Aiba H."/>
            <person name="Mizuno T."/>
        </authorList>
    </citation>
    <scope>INTERACTION WITH AHK4</scope>
</reference>
<reference key="9">
    <citation type="journal article" date="2002" name="Plant Physiol.">
        <title>Two-component signal transduction pathways in Arabidopsis.</title>
        <authorList>
            <person name="Hwang I."/>
            <person name="Chen H.-C."/>
            <person name="Sheen J."/>
        </authorList>
    </citation>
    <scope>GENE FAMILY</scope>
    <scope>NOMENCLATURE</scope>
    <scope>FUNCTION</scope>
</reference>
<reference key="10">
    <citation type="journal article" date="2004" name="Biosci. Biotechnol. Biochem.">
        <title>Comparative studies of the AHP histidine-containing phosphotransmitters implicated in His-to-Asp phosphorelay in Arabidopsis thaliana.</title>
        <authorList>
            <person name="Tanaka Y."/>
            <person name="Suzuki T."/>
            <person name="Yamashino T."/>
            <person name="Mizuno T."/>
        </authorList>
    </citation>
    <scope>FUNCTION</scope>
    <scope>TISSUE SPECIFICITY</scope>
    <scope>INTERACTION</scope>
</reference>
<reference key="11">
    <citation type="journal article" date="2006" name="FEBS J.">
        <title>Analysis of protein interactions within the cytokinin-signaling pathway of Arabidopsis thaliana.</title>
        <authorList>
            <person name="Dortay H."/>
            <person name="Mehnert N."/>
            <person name="Buerkle L."/>
            <person name="Schmuelling T."/>
            <person name="Heyl A."/>
        </authorList>
    </citation>
    <scope>INTERACTION WITH AHK2; AHK3 AND AHK4</scope>
</reference>
<reference key="12">
    <citation type="journal article" date="2008" name="J. Proteome Res.">
        <title>Toward an interaction map of the two-component signaling pathway of Arabidopsis thaliana.</title>
        <authorList>
            <person name="Dortay H."/>
            <person name="Gruhn N."/>
            <person name="Pfeifer A."/>
            <person name="Schwerdtner M."/>
            <person name="Schmuelling T."/>
            <person name="Heyl A."/>
        </authorList>
    </citation>
    <scope>INTERACTION WITH AHK2 AND AHK4</scope>
    <scope>SUBCELLULAR LOCATION</scope>
</reference>
<reference key="13">
    <citation type="journal article" date="2012" name="Mol. Cell. Proteomics">
        <title>Comparative large-scale characterisation of plant vs. mammal proteins reveals similar and idiosyncratic N-alpha acetylation features.</title>
        <authorList>
            <person name="Bienvenut W.V."/>
            <person name="Sumpton D."/>
            <person name="Martinez A."/>
            <person name="Lilla S."/>
            <person name="Espagne C."/>
            <person name="Meinnel T."/>
            <person name="Giglione C."/>
        </authorList>
    </citation>
    <scope>ACETYLATION [LARGE SCALE ANALYSIS] AT MET-1</scope>
    <scope>IDENTIFICATION BY MASS SPECTROMETRY [LARGE SCALE ANALYSIS]</scope>
</reference>
<reference key="14">
    <citation type="journal article" date="2013" name="Mol. Plant">
        <title>Structure-function analysis of Arabidopsis thaliana histidine kinase AHK5 bound to its cognate phosphotransfer protein AHP1.</title>
        <authorList>
            <person name="Bauer J."/>
            <person name="Reiss K."/>
            <person name="Veerabagu M."/>
            <person name="Heunemann M."/>
            <person name="Harter K."/>
            <person name="Stehle T."/>
        </authorList>
    </citation>
    <scope>INTERACTION WITH AHK5</scope>
</reference>
<reference key="15">
    <citation type="submission" date="2014-04" db="PDB data bank">
        <title>Crystal structure of AHP2 from Arabidopsis thaliana.</title>
        <authorList>
            <person name="Degtjarik O."/>
            <person name="Dopitova R."/>
            <person name="Puehringer S."/>
            <person name="Reha D."/>
            <person name="Otrusinova O."/>
            <person name="Pekarova B."/>
            <person name="Kuty M."/>
            <person name="Zidek L."/>
            <person name="Janda L."/>
            <person name="Weiss M.S."/>
            <person name="Kuta-Smatanova I."/>
            <person name="Hejatko H."/>
        </authorList>
    </citation>
    <scope>X-RAY CRYSTALLOGRAPHY (2.53 ANGSTROMS)</scope>
</reference>
<proteinExistence type="evidence at protein level"/>
<feature type="chain" id="PRO_0000074928" description="Histidine-containing phosphotransfer protein 2">
    <location>
        <begin position="1"/>
        <end position="156"/>
    </location>
</feature>
<feature type="domain" description="HPt" evidence="1">
    <location>
        <begin position="40"/>
        <end position="147"/>
    </location>
</feature>
<feature type="modified residue" description="N-acetylmethionine" evidence="13">
    <location>
        <position position="1"/>
    </location>
</feature>
<feature type="modified residue" description="Phosphohistidine" evidence="1">
    <location>
        <position position="82"/>
    </location>
</feature>
<feature type="splice variant" id="VSP_018143" description="In isoform 2." evidence="12">
    <location>
        <begin position="115"/>
        <end position="156"/>
    </location>
</feature>
<feature type="helix" evidence="14">
    <location>
        <begin position="2"/>
        <end position="21"/>
    </location>
</feature>
<feature type="helix" evidence="14">
    <location>
        <begin position="27"/>
        <end position="33"/>
    </location>
</feature>
<feature type="helix" evidence="14">
    <location>
        <begin position="43"/>
        <end position="66"/>
    </location>
</feature>
<feature type="strand" evidence="14">
    <location>
        <begin position="69"/>
        <end position="71"/>
    </location>
</feature>
<feature type="helix" evidence="14">
    <location>
        <begin position="74"/>
        <end position="91"/>
    </location>
</feature>
<feature type="helix" evidence="14">
    <location>
        <begin position="94"/>
        <end position="108"/>
    </location>
</feature>
<feature type="helix" evidence="14">
    <location>
        <begin position="112"/>
        <end position="144"/>
    </location>
</feature>
<feature type="turn" evidence="14">
    <location>
        <begin position="145"/>
        <end position="147"/>
    </location>
</feature>
<protein>
    <recommendedName>
        <fullName>Histidine-containing phosphotransfer protein 2</fullName>
    </recommendedName>
</protein>
<gene>
    <name type="primary">AHP2</name>
    <name type="synonym">ATHP1</name>
    <name type="ordered locus">At3g29350</name>
    <name type="ORF">MUO10.6</name>
</gene>
<accession>Q9ZNV8</accession>
<accession>Q3EAX3</accession>
<evidence type="ECO:0000255" key="1">
    <source>
        <dbReference type="PROSITE-ProRule" id="PRU00110"/>
    </source>
</evidence>
<evidence type="ECO:0000269" key="2">
    <source>
    </source>
</evidence>
<evidence type="ECO:0000269" key="3">
    <source>
    </source>
</evidence>
<evidence type="ECO:0000269" key="4">
    <source>
    </source>
</evidence>
<evidence type="ECO:0000269" key="5">
    <source>
    </source>
</evidence>
<evidence type="ECO:0000269" key="6">
    <source>
    </source>
</evidence>
<evidence type="ECO:0000269" key="7">
    <source>
    </source>
</evidence>
<evidence type="ECO:0000269" key="8">
    <source>
    </source>
</evidence>
<evidence type="ECO:0000269" key="9">
    <source>
    </source>
</evidence>
<evidence type="ECO:0000269" key="10">
    <source>
    </source>
</evidence>
<evidence type="ECO:0000269" key="11">
    <source>
    </source>
</evidence>
<evidence type="ECO:0000305" key="12"/>
<evidence type="ECO:0007744" key="13">
    <source>
    </source>
</evidence>
<evidence type="ECO:0007829" key="14">
    <source>
        <dbReference type="PDB" id="4PAC"/>
    </source>
</evidence>
<comment type="function">
    <text evidence="2 6 7 11">Functions as a two-component phosphorelay mediators between cytokinin sensor histidine kinases and response regulator (B-type ARRs). Plays an important role in propagating cytokinin signal transduction through the multistep His-to-Asp phosphorelay.</text>
</comment>
<comment type="subunit">
    <text evidence="3 4 5 7 8 9 10">Interacts with the B-type response regulators ARR1, ARR2 and ARR10. Binds to AHK1, AHK2, AHK3, AHK4, AHK5, ETR1 and CKI1.</text>
</comment>
<comment type="interaction">
    <interactant intactId="EBI-1100687">
        <id>Q9ZNV8</id>
    </interactant>
    <interactant intactId="EBI-1100634">
        <id>Q9C5U2</id>
        <label>AHK2</label>
    </interactant>
    <organismsDiffer>false</organismsDiffer>
    <experiments>3</experiments>
</comment>
<comment type="interaction">
    <interactant intactId="EBI-1100687">
        <id>Q9ZNV8</id>
    </interactant>
    <interactant intactId="EBI-1100653">
        <id>Q9C5U1</id>
        <label>AHK3</label>
    </interactant>
    <organismsDiffer>false</organismsDiffer>
    <experiments>2</experiments>
</comment>
<comment type="interaction">
    <interactant intactId="EBI-1100687">
        <id>Q9ZNV8</id>
    </interactant>
    <interactant intactId="EBI-1101329">
        <id>O49397</id>
        <label>ARR10</label>
    </interactant>
    <organismsDiffer>false</organismsDiffer>
    <experiments>3</experiments>
</comment>
<comment type="interaction">
    <interactant intactId="EBI-1100687">
        <id>Q9ZNV8</id>
    </interactant>
    <interactant intactId="EBI-1100737">
        <id>Q8L9Y3</id>
        <label>ARR14</label>
    </interactant>
    <organismsDiffer>false</organismsDiffer>
    <experiments>3</experiments>
</comment>
<comment type="interaction">
    <interactant intactId="EBI-1100687">
        <id>Q9ZNV8</id>
    </interactant>
    <interactant intactId="EBI-1100982">
        <id>Q9SHC2</id>
        <label>ARR16</label>
    </interactant>
    <organismsDiffer>false</organismsDiffer>
    <experiments>2</experiments>
</comment>
<comment type="interaction">
    <interactant intactId="EBI-1100687">
        <id>Q9ZNV8</id>
    </interactant>
    <interactant intactId="EBI-1101028">
        <id>Q9ZWJ9</id>
        <label>ARR2</label>
    </interactant>
    <organismsDiffer>false</organismsDiffer>
    <experiments>7</experiments>
</comment>
<comment type="interaction">
    <interactant intactId="EBI-1100687">
        <id>Q9ZNV8</id>
    </interactant>
    <interactant intactId="EBI-1100917">
        <id>Q9ZWS7</id>
        <label>ARR7</label>
    </interactant>
    <organismsDiffer>false</organismsDiffer>
    <experiments>6</experiments>
</comment>
<comment type="interaction">
    <interactant intactId="EBI-1100687">
        <id>Q9ZNV8</id>
    </interactant>
    <interactant intactId="EBI-1100950">
        <id>O80366</id>
        <label>ARR9</label>
    </interactant>
    <organismsDiffer>false</organismsDiffer>
    <experiments>4</experiments>
</comment>
<comment type="interaction">
    <interactant intactId="EBI-1100687">
        <id>Q9ZNV8</id>
    </interactant>
    <interactant intactId="EBI-307715">
        <id>Q39009</id>
        <label>DMC1</label>
    </interactant>
    <organismsDiffer>false</organismsDiffer>
    <experiments>2</experiments>
</comment>
<comment type="interaction">
    <interactant intactId="EBI-1100687">
        <id>Q9ZNV8</id>
    </interactant>
    <interactant intactId="EBI-25512239">
        <id>Q9ZR37</id>
        <label>DSPTP1</label>
    </interactant>
    <organismsDiffer>false</organismsDiffer>
    <experiments>3</experiments>
</comment>
<comment type="interaction">
    <interactant intactId="EBI-1100687">
        <id>Q9ZNV8</id>
    </interactant>
    <interactant intactId="EBI-1554720">
        <id>Q8GYD2</id>
        <label>MND1</label>
    </interactant>
    <organismsDiffer>false</organismsDiffer>
    <experiments>2</experiments>
</comment>
<comment type="interaction">
    <interactant intactId="EBI-1100687">
        <id>Q9ZNV8</id>
    </interactant>
    <interactant intactId="EBI-25506855">
        <id>O23160</id>
        <label>MYB73</label>
    </interactant>
    <organismsDiffer>false</organismsDiffer>
    <experiments>3</experiments>
</comment>
<comment type="interaction">
    <interactant intactId="EBI-1100687">
        <id>Q9ZNV8</id>
    </interactant>
    <interactant intactId="EBI-1792336">
        <id>Q39204</id>
        <label>MYC2</label>
    </interactant>
    <organismsDiffer>false</organismsDiffer>
    <experiments>4</experiments>
</comment>
<comment type="interaction">
    <interactant intactId="EBI-1100687">
        <id>Q9ZNV8</id>
    </interactant>
    <interactant intactId="EBI-15192297">
        <id>Q9LQF0</id>
        <label>TCP23</label>
    </interactant>
    <organismsDiffer>false</organismsDiffer>
    <experiments>3</experiments>
</comment>
<comment type="interaction">
    <interactant intactId="EBI-1100687">
        <id>Q9ZNV8</id>
    </interactant>
    <interactant intactId="EBI-1388539">
        <id>Q9LMA8</id>
        <label>TIFY10A</label>
    </interactant>
    <organismsDiffer>false</organismsDiffer>
    <experiments>3</experiments>
</comment>
<comment type="interaction">
    <interactant intactId="EBI-1100687">
        <id>Q9ZNV8</id>
    </interactant>
    <interactant intactId="EBI-2312095">
        <id>Q9LDU5</id>
        <label>TIFY11A</label>
    </interactant>
    <organismsDiffer>false</organismsDiffer>
    <experiments>3</experiments>
</comment>
<comment type="interaction">
    <interactant intactId="EBI-1100687">
        <id>Q9ZNV8</id>
    </interactant>
    <interactant intactId="EBI-15206004">
        <id>Q8GY55</id>
        <label>TIFY4B</label>
    </interactant>
    <organismsDiffer>false</organismsDiffer>
    <experiments>3</experiments>
</comment>
<comment type="interaction">
    <interactant intactId="EBI-1100687">
        <id>Q9ZNV8</id>
    </interactant>
    <interactant intactId="EBI-4426557">
        <id>Q84MB2</id>
        <label>TIFY8</label>
    </interactant>
    <organismsDiffer>false</organismsDiffer>
    <experiments>3</experiments>
</comment>
<comment type="interaction">
    <interactant intactId="EBI-1100687">
        <id>Q9ZNV8</id>
    </interactant>
    <interactant intactId="EBI-2112777">
        <id>Q9SK33</id>
        <label>WRKY60</label>
    </interactant>
    <organismsDiffer>false</organismsDiffer>
    <experiments>3</experiments>
</comment>
<comment type="subcellular location">
    <subcellularLocation>
        <location evidence="9">Cytoplasm</location>
        <location evidence="9">Cytosol</location>
    </subcellularLocation>
    <subcellularLocation>
        <location evidence="9">Nucleus</location>
    </subcellularLocation>
</comment>
<comment type="alternative products">
    <event type="alternative splicing"/>
    <isoform>
        <id>Q9ZNV8-1</id>
        <name>1</name>
        <sequence type="displayed"/>
    </isoform>
    <isoform>
        <id>Q9ZNV8-2</id>
        <name>2</name>
        <sequence type="described" ref="VSP_018143"/>
    </isoform>
</comment>
<comment type="tissue specificity">
    <text evidence="7 11">Strongly expressed in flowers and roots. Detected also in leaves, siliques and stems.</text>
</comment>
<comment type="induction">
    <text evidence="11">By salt, cold and drought stress.</text>
</comment>
<comment type="domain">
    <text>Histidine-containing phosphotransfer domain (HPt) contains an active histidine that mediates the phosphotransfer.</text>
</comment>
<comment type="PTM">
    <text>Two-component system major event consists of a His-to-Asp phosphorelay between a sensor histidine kinase (HK) and a response regulator (RR). In plants, the His-to-Asp phosphorelay involves an additional intermediate named Histidine-containing phosphotransfer protein (HPt). This multistep phosphorelay consists of a His-Asp-His-Asp sequential transfer of a phosphate group between first a His and an Asp of the HK protein, followed by the transfer to a conserved His of the HPt protein and finally the transfer to an Asp in the receiver domain of the RR protein.</text>
</comment>
<comment type="miscellaneous">
    <molecule>Isoform 2</molecule>
    <text evidence="12">May be due to an intron retention.</text>
</comment>